<comment type="function">
    <text evidence="1">Ligates lysine onto the cytidine present at position 34 of the AUA codon-specific tRNA(Ile) that contains the anticodon CAU, in an ATP-dependent manner. Cytidine is converted to lysidine, thus changing the amino acid specificity of the tRNA from methionine to isoleucine.</text>
</comment>
<comment type="catalytic activity">
    <reaction evidence="1">
        <text>cytidine(34) in tRNA(Ile2) + L-lysine + ATP = lysidine(34) in tRNA(Ile2) + AMP + diphosphate + H(+)</text>
        <dbReference type="Rhea" id="RHEA:43744"/>
        <dbReference type="Rhea" id="RHEA-COMP:10625"/>
        <dbReference type="Rhea" id="RHEA-COMP:10670"/>
        <dbReference type="ChEBI" id="CHEBI:15378"/>
        <dbReference type="ChEBI" id="CHEBI:30616"/>
        <dbReference type="ChEBI" id="CHEBI:32551"/>
        <dbReference type="ChEBI" id="CHEBI:33019"/>
        <dbReference type="ChEBI" id="CHEBI:82748"/>
        <dbReference type="ChEBI" id="CHEBI:83665"/>
        <dbReference type="ChEBI" id="CHEBI:456215"/>
        <dbReference type="EC" id="6.3.4.19"/>
    </reaction>
</comment>
<comment type="subcellular location">
    <subcellularLocation>
        <location evidence="1">Cytoplasm</location>
    </subcellularLocation>
</comment>
<comment type="domain">
    <text>The N-terminal region contains the highly conserved SGGXDS motif, predicted to be a P-loop motif involved in ATP binding.</text>
</comment>
<comment type="similarity">
    <text evidence="1">Belongs to the tRNA(Ile)-lysidine synthase family.</text>
</comment>
<gene>
    <name evidence="1" type="primary">tilS</name>
    <name type="ordered locus">SeD_A0258</name>
</gene>
<organism>
    <name type="scientific">Salmonella dublin (strain CT_02021853)</name>
    <dbReference type="NCBI Taxonomy" id="439851"/>
    <lineage>
        <taxon>Bacteria</taxon>
        <taxon>Pseudomonadati</taxon>
        <taxon>Pseudomonadota</taxon>
        <taxon>Gammaproteobacteria</taxon>
        <taxon>Enterobacterales</taxon>
        <taxon>Enterobacteriaceae</taxon>
        <taxon>Salmonella</taxon>
    </lineage>
</organism>
<feature type="chain" id="PRO_1000164328" description="tRNA(Ile)-lysidine synthase">
    <location>
        <begin position="1"/>
        <end position="430"/>
    </location>
</feature>
<feature type="binding site" evidence="1">
    <location>
        <begin position="21"/>
        <end position="26"/>
    </location>
    <ligand>
        <name>ATP</name>
        <dbReference type="ChEBI" id="CHEBI:30616"/>
    </ligand>
</feature>
<accession>B5FJ36</accession>
<sequence>MTTLTLNTSLLSSRRILAAFSGGLDSTVLLHQLVLWRERHPDVTLRAIHIHHGLSPHAESWVRHCETVCARWQVPLVVERVTLADNGLGIEAHAREARYRAFAQTLLPGEVLATAQHLDDQCETFLLALKRGSGPAGLSAMGERSPFAGTLLLRPLLRETRKTLEQWAVRHGLCWIEDESNQDDAYDRNFLRLRALPLLQQRWPHFPAAVARSATLCAEQERLLDELLASDLTDCITTEGTLRLSPLMSMSDVRRAAILRRWLAMRNAPMPSRDALERIWQEVALARDDASPCLRFGDHEIRRYQSQLWWIKSVAGQHETTVAWPVWQTPLALPAGLGTVQLVPGGELRRPREEESVSIRFKAPGLLHIVGRHGGRKLKKIWQEQGIPPWRRDTTPLLFYGETLIAAAGVFVTREGAAEDKEGVSLVWHA</sequence>
<keyword id="KW-0067">ATP-binding</keyword>
<keyword id="KW-0963">Cytoplasm</keyword>
<keyword id="KW-0436">Ligase</keyword>
<keyword id="KW-0547">Nucleotide-binding</keyword>
<keyword id="KW-0819">tRNA processing</keyword>
<protein>
    <recommendedName>
        <fullName evidence="1">tRNA(Ile)-lysidine synthase</fullName>
        <ecNumber evidence="1">6.3.4.19</ecNumber>
    </recommendedName>
    <alternativeName>
        <fullName evidence="1">tRNA(Ile)-2-lysyl-cytidine synthase</fullName>
    </alternativeName>
    <alternativeName>
        <fullName evidence="1">tRNA(Ile)-lysidine synthetase</fullName>
    </alternativeName>
</protein>
<reference key="1">
    <citation type="journal article" date="2011" name="J. Bacteriol.">
        <title>Comparative genomics of 28 Salmonella enterica isolates: evidence for CRISPR-mediated adaptive sublineage evolution.</title>
        <authorList>
            <person name="Fricke W.F."/>
            <person name="Mammel M.K."/>
            <person name="McDermott P.F."/>
            <person name="Tartera C."/>
            <person name="White D.G."/>
            <person name="Leclerc J.E."/>
            <person name="Ravel J."/>
            <person name="Cebula T.A."/>
        </authorList>
    </citation>
    <scope>NUCLEOTIDE SEQUENCE [LARGE SCALE GENOMIC DNA]</scope>
    <source>
        <strain>CT_02021853</strain>
    </source>
</reference>
<proteinExistence type="inferred from homology"/>
<dbReference type="EC" id="6.3.4.19" evidence="1"/>
<dbReference type="EMBL" id="CP001144">
    <property type="protein sequence ID" value="ACH75874.1"/>
    <property type="molecule type" value="Genomic_DNA"/>
</dbReference>
<dbReference type="RefSeq" id="WP_000210070.1">
    <property type="nucleotide sequence ID" value="NC_011205.1"/>
</dbReference>
<dbReference type="SMR" id="B5FJ36"/>
<dbReference type="KEGG" id="sed:SeD_A0258"/>
<dbReference type="HOGENOM" id="CLU_018869_2_0_6"/>
<dbReference type="Proteomes" id="UP000008322">
    <property type="component" value="Chromosome"/>
</dbReference>
<dbReference type="GO" id="GO:0005737">
    <property type="term" value="C:cytoplasm"/>
    <property type="evidence" value="ECO:0007669"/>
    <property type="project" value="UniProtKB-SubCell"/>
</dbReference>
<dbReference type="GO" id="GO:0005524">
    <property type="term" value="F:ATP binding"/>
    <property type="evidence" value="ECO:0007669"/>
    <property type="project" value="UniProtKB-UniRule"/>
</dbReference>
<dbReference type="GO" id="GO:0032267">
    <property type="term" value="F:tRNA(Ile)-lysidine synthase activity"/>
    <property type="evidence" value="ECO:0007669"/>
    <property type="project" value="UniProtKB-EC"/>
</dbReference>
<dbReference type="GO" id="GO:0006400">
    <property type="term" value="P:tRNA modification"/>
    <property type="evidence" value="ECO:0007669"/>
    <property type="project" value="UniProtKB-UniRule"/>
</dbReference>
<dbReference type="CDD" id="cd01992">
    <property type="entry name" value="TilS_N"/>
    <property type="match status" value="1"/>
</dbReference>
<dbReference type="FunFam" id="3.40.50.620:FF:000173">
    <property type="entry name" value="tRNA(Ile)-lysidine synthase"/>
    <property type="match status" value="1"/>
</dbReference>
<dbReference type="Gene3D" id="1.20.59.20">
    <property type="match status" value="1"/>
</dbReference>
<dbReference type="Gene3D" id="3.40.50.620">
    <property type="entry name" value="HUPs"/>
    <property type="match status" value="1"/>
</dbReference>
<dbReference type="HAMAP" id="MF_01161">
    <property type="entry name" value="tRNA_Ile_lys_synt"/>
    <property type="match status" value="1"/>
</dbReference>
<dbReference type="InterPro" id="IPR012796">
    <property type="entry name" value="Lysidine-tRNA-synth_C"/>
</dbReference>
<dbReference type="InterPro" id="IPR014729">
    <property type="entry name" value="Rossmann-like_a/b/a_fold"/>
</dbReference>
<dbReference type="InterPro" id="IPR011063">
    <property type="entry name" value="TilS/TtcA_N"/>
</dbReference>
<dbReference type="InterPro" id="IPR012094">
    <property type="entry name" value="tRNA_Ile_lys_synt"/>
</dbReference>
<dbReference type="InterPro" id="IPR012795">
    <property type="entry name" value="tRNA_Ile_lys_synt_N"/>
</dbReference>
<dbReference type="InterPro" id="IPR015262">
    <property type="entry name" value="tRNA_Ile_lys_synt_subst-bd"/>
</dbReference>
<dbReference type="NCBIfam" id="TIGR02433">
    <property type="entry name" value="lysidine_TilS_C"/>
    <property type="match status" value="1"/>
</dbReference>
<dbReference type="NCBIfam" id="TIGR02432">
    <property type="entry name" value="lysidine_TilS_N"/>
    <property type="match status" value="1"/>
</dbReference>
<dbReference type="NCBIfam" id="NF007942">
    <property type="entry name" value="PRK10660.1"/>
    <property type="match status" value="1"/>
</dbReference>
<dbReference type="PANTHER" id="PTHR43033">
    <property type="entry name" value="TRNA(ILE)-LYSIDINE SYNTHASE-RELATED"/>
    <property type="match status" value="1"/>
</dbReference>
<dbReference type="PANTHER" id="PTHR43033:SF1">
    <property type="entry name" value="TRNA(ILE)-LYSIDINE SYNTHASE-RELATED"/>
    <property type="match status" value="1"/>
</dbReference>
<dbReference type="Pfam" id="PF01171">
    <property type="entry name" value="ATP_bind_3"/>
    <property type="match status" value="1"/>
</dbReference>
<dbReference type="Pfam" id="PF09179">
    <property type="entry name" value="TilS"/>
    <property type="match status" value="1"/>
</dbReference>
<dbReference type="Pfam" id="PF11734">
    <property type="entry name" value="TilS_C"/>
    <property type="match status" value="1"/>
</dbReference>
<dbReference type="SMART" id="SM00977">
    <property type="entry name" value="TilS_C"/>
    <property type="match status" value="1"/>
</dbReference>
<dbReference type="SUPFAM" id="SSF52402">
    <property type="entry name" value="Adenine nucleotide alpha hydrolases-like"/>
    <property type="match status" value="1"/>
</dbReference>
<dbReference type="SUPFAM" id="SSF82829">
    <property type="entry name" value="MesJ substrate recognition domain-like"/>
    <property type="match status" value="1"/>
</dbReference>
<dbReference type="SUPFAM" id="SSF56037">
    <property type="entry name" value="PheT/TilS domain"/>
    <property type="match status" value="1"/>
</dbReference>
<name>TILS_SALDC</name>
<evidence type="ECO:0000255" key="1">
    <source>
        <dbReference type="HAMAP-Rule" id="MF_01161"/>
    </source>
</evidence>